<accession>B8IHS8</accession>
<keyword id="KW-0028">Amino-acid biosynthesis</keyword>
<keyword id="KW-0100">Branched-chain amino acid biosynthesis</keyword>
<keyword id="KW-0963">Cytoplasm</keyword>
<keyword id="KW-0432">Leucine biosynthesis</keyword>
<keyword id="KW-0464">Manganese</keyword>
<keyword id="KW-0479">Metal-binding</keyword>
<keyword id="KW-1185">Reference proteome</keyword>
<keyword id="KW-0808">Transferase</keyword>
<evidence type="ECO:0000255" key="1">
    <source>
        <dbReference type="HAMAP-Rule" id="MF_01025"/>
    </source>
</evidence>
<sequence>MTETAASSAERVLIFDTTLRDGEQCPGATMTFEEKLAVAEMLDGMGVDIIEAGFPIASNGDFDAVAEIARRTKTSVVAGLARAISADIARAGEAVRLAKRGRIHTFVSTSPIHLAHQMRKSEEEVLEIIQKTVAQARDLVEDVEWSAMDATRTPIDYLCRCVEMAIKMGATTINLPDTVGYATPDEYRAMFRSVRERVPNADRAIFSVHCHNDLGLAIANSLAGIEGGARQVECTINGIGERAGNAALEEVVMALRTRADVLPYTTGIDTTQIMRASKLVAAATHFPVQYNKAVVGRNAFAHESGIHQDGMLKNQSTYEIMTPESVGVQKTSLVMGKHSGRAAFRSKLEELGYRLSDNQFQDAFERFKALADRKKNVYDEDIEALVDENLATAHDRIRLLSLTVIAGTRGPQRATMRLDIDGRQATEEADGNGPVDAVFNAIHALVPHEAKLELYDVHAVTEGTDAQAEVSVRLRQGERSVTARGADPDTLVASAKAYLAALNKLLAGANRLHAQHAAAE</sequence>
<proteinExistence type="inferred from homology"/>
<dbReference type="EC" id="2.3.3.13" evidence="1"/>
<dbReference type="EMBL" id="CP001349">
    <property type="protein sequence ID" value="ACL55966.1"/>
    <property type="molecule type" value="Genomic_DNA"/>
</dbReference>
<dbReference type="RefSeq" id="WP_015927664.1">
    <property type="nucleotide sequence ID" value="NC_011894.1"/>
</dbReference>
<dbReference type="SMR" id="B8IHS8"/>
<dbReference type="STRING" id="460265.Mnod_0953"/>
<dbReference type="KEGG" id="mno:Mnod_0953"/>
<dbReference type="eggNOG" id="COG0119">
    <property type="taxonomic scope" value="Bacteria"/>
</dbReference>
<dbReference type="HOGENOM" id="CLU_022158_0_1_5"/>
<dbReference type="OrthoDB" id="9803573at2"/>
<dbReference type="UniPathway" id="UPA00048">
    <property type="reaction ID" value="UER00070"/>
</dbReference>
<dbReference type="Proteomes" id="UP000008207">
    <property type="component" value="Chromosome"/>
</dbReference>
<dbReference type="GO" id="GO:0005829">
    <property type="term" value="C:cytosol"/>
    <property type="evidence" value="ECO:0007669"/>
    <property type="project" value="TreeGrafter"/>
</dbReference>
<dbReference type="GO" id="GO:0003852">
    <property type="term" value="F:2-isopropylmalate synthase activity"/>
    <property type="evidence" value="ECO:0007669"/>
    <property type="project" value="UniProtKB-UniRule"/>
</dbReference>
<dbReference type="GO" id="GO:0003985">
    <property type="term" value="F:acetyl-CoA C-acetyltransferase activity"/>
    <property type="evidence" value="ECO:0007669"/>
    <property type="project" value="UniProtKB-UniRule"/>
</dbReference>
<dbReference type="GO" id="GO:0030145">
    <property type="term" value="F:manganese ion binding"/>
    <property type="evidence" value="ECO:0007669"/>
    <property type="project" value="UniProtKB-UniRule"/>
</dbReference>
<dbReference type="GO" id="GO:0009098">
    <property type="term" value="P:L-leucine biosynthetic process"/>
    <property type="evidence" value="ECO:0007669"/>
    <property type="project" value="UniProtKB-UniRule"/>
</dbReference>
<dbReference type="CDD" id="cd07940">
    <property type="entry name" value="DRE_TIM_IPMS"/>
    <property type="match status" value="1"/>
</dbReference>
<dbReference type="FunFam" id="1.10.238.260:FF:000001">
    <property type="entry name" value="2-isopropylmalate synthase"/>
    <property type="match status" value="1"/>
</dbReference>
<dbReference type="FunFam" id="3.20.20.70:FF:000010">
    <property type="entry name" value="2-isopropylmalate synthase"/>
    <property type="match status" value="1"/>
</dbReference>
<dbReference type="FunFam" id="3.30.160.270:FF:000003">
    <property type="entry name" value="2-isopropylmalate synthase"/>
    <property type="match status" value="1"/>
</dbReference>
<dbReference type="Gene3D" id="1.10.238.260">
    <property type="match status" value="1"/>
</dbReference>
<dbReference type="Gene3D" id="3.30.160.270">
    <property type="match status" value="1"/>
</dbReference>
<dbReference type="Gene3D" id="3.20.20.70">
    <property type="entry name" value="Aldolase class I"/>
    <property type="match status" value="1"/>
</dbReference>
<dbReference type="HAMAP" id="MF_01025">
    <property type="entry name" value="LeuA_type1"/>
    <property type="match status" value="1"/>
</dbReference>
<dbReference type="InterPro" id="IPR050073">
    <property type="entry name" value="2-IPM_HCS-like"/>
</dbReference>
<dbReference type="InterPro" id="IPR013709">
    <property type="entry name" value="2-isopropylmalate_synth_dimer"/>
</dbReference>
<dbReference type="InterPro" id="IPR002034">
    <property type="entry name" value="AIPM/Hcit_synth_CS"/>
</dbReference>
<dbReference type="InterPro" id="IPR013785">
    <property type="entry name" value="Aldolase_TIM"/>
</dbReference>
<dbReference type="InterPro" id="IPR054691">
    <property type="entry name" value="LeuA/HCS_post-cat"/>
</dbReference>
<dbReference type="InterPro" id="IPR036230">
    <property type="entry name" value="LeuA_allosteric_dom_sf"/>
</dbReference>
<dbReference type="InterPro" id="IPR005671">
    <property type="entry name" value="LeuA_bact_synth"/>
</dbReference>
<dbReference type="InterPro" id="IPR000891">
    <property type="entry name" value="PYR_CT"/>
</dbReference>
<dbReference type="NCBIfam" id="TIGR00973">
    <property type="entry name" value="leuA_bact"/>
    <property type="match status" value="1"/>
</dbReference>
<dbReference type="NCBIfam" id="NF002086">
    <property type="entry name" value="PRK00915.1-3"/>
    <property type="match status" value="1"/>
</dbReference>
<dbReference type="NCBIfam" id="NF002087">
    <property type="entry name" value="PRK00915.1-4"/>
    <property type="match status" value="1"/>
</dbReference>
<dbReference type="PANTHER" id="PTHR10277:SF9">
    <property type="entry name" value="2-ISOPROPYLMALATE SYNTHASE 1, CHLOROPLASTIC-RELATED"/>
    <property type="match status" value="1"/>
</dbReference>
<dbReference type="PANTHER" id="PTHR10277">
    <property type="entry name" value="HOMOCITRATE SYNTHASE-RELATED"/>
    <property type="match status" value="1"/>
</dbReference>
<dbReference type="Pfam" id="PF22617">
    <property type="entry name" value="HCS_D2"/>
    <property type="match status" value="1"/>
</dbReference>
<dbReference type="Pfam" id="PF00682">
    <property type="entry name" value="HMGL-like"/>
    <property type="match status" value="1"/>
</dbReference>
<dbReference type="Pfam" id="PF08502">
    <property type="entry name" value="LeuA_dimer"/>
    <property type="match status" value="1"/>
</dbReference>
<dbReference type="SMART" id="SM00917">
    <property type="entry name" value="LeuA_dimer"/>
    <property type="match status" value="1"/>
</dbReference>
<dbReference type="SUPFAM" id="SSF110921">
    <property type="entry name" value="2-isopropylmalate synthase LeuA, allosteric (dimerisation) domain"/>
    <property type="match status" value="1"/>
</dbReference>
<dbReference type="SUPFAM" id="SSF51569">
    <property type="entry name" value="Aldolase"/>
    <property type="match status" value="1"/>
</dbReference>
<dbReference type="PROSITE" id="PS00815">
    <property type="entry name" value="AIPM_HOMOCIT_SYNTH_1"/>
    <property type="match status" value="1"/>
</dbReference>
<dbReference type="PROSITE" id="PS00816">
    <property type="entry name" value="AIPM_HOMOCIT_SYNTH_2"/>
    <property type="match status" value="1"/>
</dbReference>
<dbReference type="PROSITE" id="PS50991">
    <property type="entry name" value="PYR_CT"/>
    <property type="match status" value="1"/>
</dbReference>
<gene>
    <name evidence="1" type="primary">leuA</name>
    <name type="ordered locus">Mnod_0953</name>
</gene>
<protein>
    <recommendedName>
        <fullName evidence="1">2-isopropylmalate synthase</fullName>
        <ecNumber evidence="1">2.3.3.13</ecNumber>
    </recommendedName>
    <alternativeName>
        <fullName evidence="1">Alpha-IPM synthase</fullName>
    </alternativeName>
    <alternativeName>
        <fullName evidence="1">Alpha-isopropylmalate synthase</fullName>
    </alternativeName>
</protein>
<organism>
    <name type="scientific">Methylobacterium nodulans (strain LMG 21967 / CNCM I-2342 / ORS 2060)</name>
    <dbReference type="NCBI Taxonomy" id="460265"/>
    <lineage>
        <taxon>Bacteria</taxon>
        <taxon>Pseudomonadati</taxon>
        <taxon>Pseudomonadota</taxon>
        <taxon>Alphaproteobacteria</taxon>
        <taxon>Hyphomicrobiales</taxon>
        <taxon>Methylobacteriaceae</taxon>
        <taxon>Methylobacterium</taxon>
    </lineage>
</organism>
<reference key="1">
    <citation type="submission" date="2009-01" db="EMBL/GenBank/DDBJ databases">
        <title>Complete sequence of chromosome of Methylobacterium nodulans ORS 2060.</title>
        <authorList>
            <consortium name="US DOE Joint Genome Institute"/>
            <person name="Lucas S."/>
            <person name="Copeland A."/>
            <person name="Lapidus A."/>
            <person name="Glavina del Rio T."/>
            <person name="Dalin E."/>
            <person name="Tice H."/>
            <person name="Bruce D."/>
            <person name="Goodwin L."/>
            <person name="Pitluck S."/>
            <person name="Sims D."/>
            <person name="Brettin T."/>
            <person name="Detter J.C."/>
            <person name="Han C."/>
            <person name="Larimer F."/>
            <person name="Land M."/>
            <person name="Hauser L."/>
            <person name="Kyrpides N."/>
            <person name="Ivanova N."/>
            <person name="Marx C.J."/>
            <person name="Richardson P."/>
        </authorList>
    </citation>
    <scope>NUCLEOTIDE SEQUENCE [LARGE SCALE GENOMIC DNA]</scope>
    <source>
        <strain>LMG 21967 / CNCM I-2342 / ORS 2060</strain>
    </source>
</reference>
<comment type="function">
    <text evidence="1">Catalyzes the condensation of the acetyl group of acetyl-CoA with 3-methyl-2-oxobutanoate (2-ketoisovalerate) to form 3-carboxy-3-hydroxy-4-methylpentanoate (2-isopropylmalate).</text>
</comment>
<comment type="catalytic activity">
    <reaction evidence="1">
        <text>3-methyl-2-oxobutanoate + acetyl-CoA + H2O = (2S)-2-isopropylmalate + CoA + H(+)</text>
        <dbReference type="Rhea" id="RHEA:21524"/>
        <dbReference type="ChEBI" id="CHEBI:1178"/>
        <dbReference type="ChEBI" id="CHEBI:11851"/>
        <dbReference type="ChEBI" id="CHEBI:15377"/>
        <dbReference type="ChEBI" id="CHEBI:15378"/>
        <dbReference type="ChEBI" id="CHEBI:57287"/>
        <dbReference type="ChEBI" id="CHEBI:57288"/>
        <dbReference type="EC" id="2.3.3.13"/>
    </reaction>
</comment>
<comment type="cofactor">
    <cofactor evidence="1">
        <name>Mn(2+)</name>
        <dbReference type="ChEBI" id="CHEBI:29035"/>
    </cofactor>
</comment>
<comment type="pathway">
    <text evidence="1">Amino-acid biosynthesis; L-leucine biosynthesis; L-leucine from 3-methyl-2-oxobutanoate: step 1/4.</text>
</comment>
<comment type="subunit">
    <text evidence="1">Homodimer.</text>
</comment>
<comment type="subcellular location">
    <subcellularLocation>
        <location evidence="1">Cytoplasm</location>
    </subcellularLocation>
</comment>
<comment type="similarity">
    <text evidence="1">Belongs to the alpha-IPM synthase/homocitrate synthase family. LeuA type 1 subfamily.</text>
</comment>
<name>LEU1_METNO</name>
<feature type="chain" id="PRO_1000149221" description="2-isopropylmalate synthase">
    <location>
        <begin position="1"/>
        <end position="520"/>
    </location>
</feature>
<feature type="domain" description="Pyruvate carboxyltransferase" evidence="1">
    <location>
        <begin position="12"/>
        <end position="274"/>
    </location>
</feature>
<feature type="region of interest" description="Regulatory domain" evidence="1">
    <location>
        <begin position="398"/>
        <end position="520"/>
    </location>
</feature>
<feature type="binding site" evidence="1">
    <location>
        <position position="21"/>
    </location>
    <ligand>
        <name>Mn(2+)</name>
        <dbReference type="ChEBI" id="CHEBI:29035"/>
    </ligand>
</feature>
<feature type="binding site" evidence="1">
    <location>
        <position position="209"/>
    </location>
    <ligand>
        <name>Mn(2+)</name>
        <dbReference type="ChEBI" id="CHEBI:29035"/>
    </ligand>
</feature>
<feature type="binding site" evidence="1">
    <location>
        <position position="211"/>
    </location>
    <ligand>
        <name>Mn(2+)</name>
        <dbReference type="ChEBI" id="CHEBI:29035"/>
    </ligand>
</feature>
<feature type="binding site" evidence="1">
    <location>
        <position position="245"/>
    </location>
    <ligand>
        <name>Mn(2+)</name>
        <dbReference type="ChEBI" id="CHEBI:29035"/>
    </ligand>
</feature>